<sequence length="429" mass="43756">MQFKNALTATAILSASALAANSTTSIPSSCSIGTSATATAQADLDKISGCSTIVGNLTITGDLGSAALASIQEIDGSLTIFNSSSLSSFSADSIKKITGDLNMQELIILTSASFGSLQEVDSINMVTLPAISTFSTDLQNANNIIVSDTTLESVEGFSTLKKVNVFNINNNRYLNSFQSSLESVSDSLQFSSNGDNTTLAFDNLVWANNITLRDVNSISFGSLQTVNASLGFINNTLPSLNLTQLSKVGQSLSIVSNDELSKAAFSNLTTVGGGFIIANNTQLKVIDGFNKVQTVGGAIEVTGNFSTLDLSSLKSVRGGANFDSSSSNFSCNALKKLQSNGAIQGDSFVCKNGATSTSVKLSSTSTESSKSSATSSASSSGDASNAQASVSASASSSSSSSKKSKGAAPELVPATSFMGVVAAVAVALL</sequence>
<protein>
    <recommendedName>
        <fullName>Cell wall protein ECM33</fullName>
    </recommendedName>
    <alternativeName>
        <fullName>Extracellular mutant protein 33</fullName>
    </alternativeName>
</protein>
<keyword id="KW-1003">Cell membrane</keyword>
<keyword id="KW-0134">Cell wall</keyword>
<keyword id="KW-0961">Cell wall biogenesis/degradation</keyword>
<keyword id="KW-0325">Glycoprotein</keyword>
<keyword id="KW-0336">GPI-anchor</keyword>
<keyword id="KW-0449">Lipoprotein</keyword>
<keyword id="KW-0472">Membrane</keyword>
<keyword id="KW-0597">Phosphoprotein</keyword>
<keyword id="KW-0964">Secreted</keyword>
<keyword id="KW-0732">Signal</keyword>
<gene>
    <name type="primary">ECM33</name>
    <name type="ORF">SCY_0292</name>
</gene>
<evidence type="ECO:0000250" key="1"/>
<evidence type="ECO:0000250" key="2">
    <source>
        <dbReference type="UniProtKB" id="P38248"/>
    </source>
</evidence>
<evidence type="ECO:0000255" key="3"/>
<evidence type="ECO:0000256" key="4">
    <source>
        <dbReference type="SAM" id="MobiDB-lite"/>
    </source>
</evidence>
<evidence type="ECO:0000305" key="5"/>
<organism>
    <name type="scientific">Saccharomyces cerevisiae (strain YJM789)</name>
    <name type="common">Baker's yeast</name>
    <dbReference type="NCBI Taxonomy" id="307796"/>
    <lineage>
        <taxon>Eukaryota</taxon>
        <taxon>Fungi</taxon>
        <taxon>Dikarya</taxon>
        <taxon>Ascomycota</taxon>
        <taxon>Saccharomycotina</taxon>
        <taxon>Saccharomycetes</taxon>
        <taxon>Saccharomycetales</taxon>
        <taxon>Saccharomycetaceae</taxon>
        <taxon>Saccharomyces</taxon>
    </lineage>
</organism>
<proteinExistence type="inferred from homology"/>
<accession>A6ZL22</accession>
<comment type="function">
    <text evidence="1">Required for proper cell wall integrity and for the correct assembly of the mannoprotein outer layer of the cell wall. Important for apical bud growth (By similarity).</text>
</comment>
<comment type="subcellular location">
    <subcellularLocation>
        <location evidence="1">Cell membrane</location>
        <topology evidence="1">Lipid-anchor</topology>
        <topology evidence="1">GPI-anchor</topology>
    </subcellularLocation>
    <subcellularLocation>
        <location evidence="1">Secreted</location>
        <location evidence="1">Cell wall</location>
    </subcellularLocation>
    <text evidence="1">Identified as GPI-anchored plasma membrane protein (GPI-PMP) as well as covalently-linked GPI-modified cell wall protein (GPI-CWP) in the outer cell wall layer.</text>
</comment>
<comment type="PTM">
    <text evidence="1">The GPI-anchor is attached to the protein in the endoplasmic reticulum and serves to target the protein to the cell surface. There, the glucosamine-inositol phospholipid moiety is cleaved off and the GPI-modified mannoprotein is covalently attached via its lipidless GPI glycan remnant to the 1,6-beta-glucan of the outer cell wall layer (By similarity).</text>
</comment>
<comment type="similarity">
    <text evidence="5">Belongs to the SPS2 family.</text>
</comment>
<comment type="sequence caution" evidence="5">
    <conflict type="erroneous gene model prediction">
        <sequence resource="EMBL-CDS" id="EDN64691"/>
    </conflict>
</comment>
<reference key="1">
    <citation type="journal article" date="2007" name="Proc. Natl. Acad. Sci. U.S.A.">
        <title>Genome sequencing and comparative analysis of Saccharomyces cerevisiae strain YJM789.</title>
        <authorList>
            <person name="Wei W."/>
            <person name="McCusker J.H."/>
            <person name="Hyman R.W."/>
            <person name="Jones T."/>
            <person name="Ning Y."/>
            <person name="Cao Z."/>
            <person name="Gu Z."/>
            <person name="Bruno D."/>
            <person name="Miranda M."/>
            <person name="Nguyen M."/>
            <person name="Wilhelmy J."/>
            <person name="Komp C."/>
            <person name="Tamse R."/>
            <person name="Wang X."/>
            <person name="Jia P."/>
            <person name="Luedi P."/>
            <person name="Oefner P.J."/>
            <person name="David L."/>
            <person name="Dietrich F.S."/>
            <person name="Li Y."/>
            <person name="Davis R.W."/>
            <person name="Steinmetz L.M."/>
        </authorList>
    </citation>
    <scope>NUCLEOTIDE SEQUENCE [LARGE SCALE GENOMIC DNA]</scope>
    <source>
        <strain>YJM789</strain>
    </source>
</reference>
<dbReference type="EMBL" id="AAFW02000011">
    <property type="protein sequence ID" value="EDN64691.1"/>
    <property type="status" value="ALT_SEQ"/>
    <property type="molecule type" value="Genomic_DNA"/>
</dbReference>
<dbReference type="SMR" id="A6ZL22"/>
<dbReference type="GlyCosmos" id="A6ZL22">
    <property type="glycosylation" value="12 sites, No reported glycans"/>
</dbReference>
<dbReference type="HOGENOM" id="CLU_035846_0_0_1"/>
<dbReference type="OrthoDB" id="37283at4893"/>
<dbReference type="Proteomes" id="UP000007060">
    <property type="component" value="Unassembled WGS sequence"/>
</dbReference>
<dbReference type="GO" id="GO:0005576">
    <property type="term" value="C:extracellular region"/>
    <property type="evidence" value="ECO:0007669"/>
    <property type="project" value="UniProtKB-KW"/>
</dbReference>
<dbReference type="GO" id="GO:0005886">
    <property type="term" value="C:plasma membrane"/>
    <property type="evidence" value="ECO:0007669"/>
    <property type="project" value="UniProtKB-SubCell"/>
</dbReference>
<dbReference type="GO" id="GO:0098552">
    <property type="term" value="C:side of membrane"/>
    <property type="evidence" value="ECO:0007669"/>
    <property type="project" value="UniProtKB-KW"/>
</dbReference>
<dbReference type="GO" id="GO:0071555">
    <property type="term" value="P:cell wall organization"/>
    <property type="evidence" value="ECO:0007669"/>
    <property type="project" value="UniProtKB-KW"/>
</dbReference>
<dbReference type="FunFam" id="3.80.20.20:FF:000016">
    <property type="entry name" value="Cell wall protein ECM33"/>
    <property type="match status" value="1"/>
</dbReference>
<dbReference type="Gene3D" id="3.80.20.20">
    <property type="entry name" value="Receptor L-domain"/>
    <property type="match status" value="1"/>
</dbReference>
<dbReference type="InterPro" id="IPR051648">
    <property type="entry name" value="CWI-Assembly_Regulator"/>
</dbReference>
<dbReference type="InterPro" id="IPR036941">
    <property type="entry name" value="Rcpt_L-dom_sf"/>
</dbReference>
<dbReference type="PANTHER" id="PTHR31018:SF3">
    <property type="entry name" value="RECEPTOR PROTEIN-TYROSINE KINASE"/>
    <property type="match status" value="1"/>
</dbReference>
<dbReference type="PANTHER" id="PTHR31018">
    <property type="entry name" value="SPORULATION-SPECIFIC PROTEIN-RELATED"/>
    <property type="match status" value="1"/>
</dbReference>
<dbReference type="SUPFAM" id="SSF52058">
    <property type="entry name" value="L domain-like"/>
    <property type="match status" value="1"/>
</dbReference>
<feature type="signal peptide" evidence="3">
    <location>
        <begin position="1"/>
        <end position="19"/>
    </location>
</feature>
<feature type="chain" id="PRO_0000330253" description="Cell wall protein ECM33">
    <location>
        <begin position="20"/>
        <end position="406"/>
    </location>
</feature>
<feature type="propeptide" id="PRO_0000330254" description="Removed in mature form" evidence="3">
    <location>
        <begin position="407"/>
        <end position="429"/>
    </location>
</feature>
<feature type="region of interest" description="Disordered" evidence="4">
    <location>
        <begin position="361"/>
        <end position="410"/>
    </location>
</feature>
<feature type="compositionally biased region" description="Low complexity" evidence="4">
    <location>
        <begin position="361"/>
        <end position="401"/>
    </location>
</feature>
<feature type="modified residue" description="Phosphoserine" evidence="2">
    <location>
        <position position="339"/>
    </location>
</feature>
<feature type="lipid moiety-binding region" description="GPI-anchor amidated glycine" evidence="3">
    <location>
        <position position="406"/>
    </location>
</feature>
<feature type="glycosylation site" description="N-linked (GlcNAc...) asparagine" evidence="3">
    <location>
        <position position="21"/>
    </location>
</feature>
<feature type="glycosylation site" description="N-linked (GlcNAc...) asparagine" evidence="3">
    <location>
        <position position="56"/>
    </location>
</feature>
<feature type="glycosylation site" description="N-linked (GlcNAc...) asparagine" evidence="3">
    <location>
        <position position="82"/>
    </location>
</feature>
<feature type="glycosylation site" description="N-linked (GlcNAc...) asparagine" evidence="3">
    <location>
        <position position="196"/>
    </location>
</feature>
<feature type="glycosylation site" description="N-linked (GlcNAc...) asparagine" evidence="3">
    <location>
        <position position="209"/>
    </location>
</feature>
<feature type="glycosylation site" description="N-linked (GlcNAc...) asparagine" evidence="3">
    <location>
        <position position="227"/>
    </location>
</feature>
<feature type="glycosylation site" description="N-linked (GlcNAc...) asparagine" evidence="3">
    <location>
        <position position="234"/>
    </location>
</feature>
<feature type="glycosylation site" description="N-linked (GlcNAc...) asparagine" evidence="3">
    <location>
        <position position="241"/>
    </location>
</feature>
<feature type="glycosylation site" description="N-linked (GlcNAc...) asparagine" evidence="3">
    <location>
        <position position="267"/>
    </location>
</feature>
<feature type="glycosylation site" description="N-linked (GlcNAc...) asparagine" evidence="3">
    <location>
        <position position="279"/>
    </location>
</feature>
<feature type="glycosylation site" description="N-linked (GlcNAc...) asparagine" evidence="3">
    <location>
        <position position="304"/>
    </location>
</feature>
<feature type="glycosylation site" description="N-linked (GlcNAc...) asparagine" evidence="3">
    <location>
        <position position="328"/>
    </location>
</feature>
<name>ECM33_YEAS7</name>